<feature type="chain" id="PRO_0000125830" description="Large ribosomal subunit protein uL1">
    <location>
        <begin position="1"/>
        <end position="217"/>
    </location>
</feature>
<sequence>MSSKVSRDTLYECVNAVLQASKDKKRNFLETVELQIGLKNYDPQKDKRFSGTVKLKYIPRPKMQVCVLGDQQHCDEAKSLTVPCMDAEALKKLNKNKKLVKKLAKKYDAFLASESLIKQIPRLLGPGLNKAGKFPGLLSHQESMTQKIDEVKATIKFQMKKVLCLSVAVGHVDMTPDELAQNVHLSINFLVSLLKKHWQNVRSLHMKSTMGPPPKLY</sequence>
<comment type="similarity">
    <text evidence="1">Belongs to the universal ribosomal protein uL1 family.</text>
</comment>
<keyword id="KW-0687">Ribonucleoprotein</keyword>
<keyword id="KW-0689">Ribosomal protein</keyword>
<protein>
    <recommendedName>
        <fullName evidence="1">Large ribosomal subunit protein uL1</fullName>
    </recommendedName>
    <alternativeName>
        <fullName>60S ribosomal protein L10a</fullName>
    </alternativeName>
</protein>
<organism>
    <name type="scientific">Spodoptera frugiperda</name>
    <name type="common">Fall armyworm</name>
    <dbReference type="NCBI Taxonomy" id="7108"/>
    <lineage>
        <taxon>Eukaryota</taxon>
        <taxon>Metazoa</taxon>
        <taxon>Ecdysozoa</taxon>
        <taxon>Arthropoda</taxon>
        <taxon>Hexapoda</taxon>
        <taxon>Insecta</taxon>
        <taxon>Pterygota</taxon>
        <taxon>Neoptera</taxon>
        <taxon>Endopterygota</taxon>
        <taxon>Lepidoptera</taxon>
        <taxon>Glossata</taxon>
        <taxon>Ditrysia</taxon>
        <taxon>Noctuoidea</taxon>
        <taxon>Noctuidae</taxon>
        <taxon>Amphipyrinae</taxon>
        <taxon>Spodoptera</taxon>
    </lineage>
</organism>
<name>RL10A_SPOFR</name>
<gene>
    <name type="primary">RpL10A</name>
</gene>
<reference key="1">
    <citation type="journal article" date="2003" name="Bioinformatics">
        <title>Annotation pattern of ESTs from Spodoptera frugiperda Sf9 cells and analysis of the ribosomal protein genes reveal insect-specific features and unexpectedly low codon usage bias.</title>
        <authorList>
            <person name="Landais I."/>
            <person name="Ogliastro M."/>
            <person name="Mita K."/>
            <person name="Nohata J."/>
            <person name="Lopez-Ferber M."/>
            <person name="Duonor-Cerutti M."/>
            <person name="Shimada T."/>
            <person name="Fournier P."/>
            <person name="Devauchelle G."/>
        </authorList>
    </citation>
    <scope>NUCLEOTIDE SEQUENCE [LARGE SCALE MRNA]</scope>
</reference>
<accession>Q963B6</accession>
<dbReference type="EMBL" id="AF391092">
    <property type="protein sequence ID" value="AAK76990.1"/>
    <property type="molecule type" value="mRNA"/>
</dbReference>
<dbReference type="SMR" id="Q963B6"/>
<dbReference type="OrthoDB" id="2449818at2759"/>
<dbReference type="Proteomes" id="UP000829999">
    <property type="component" value="Unplaced"/>
</dbReference>
<dbReference type="GO" id="GO:0015934">
    <property type="term" value="C:large ribosomal subunit"/>
    <property type="evidence" value="ECO:0007669"/>
    <property type="project" value="InterPro"/>
</dbReference>
<dbReference type="GO" id="GO:0003723">
    <property type="term" value="F:RNA binding"/>
    <property type="evidence" value="ECO:0007669"/>
    <property type="project" value="InterPro"/>
</dbReference>
<dbReference type="GO" id="GO:0003735">
    <property type="term" value="F:structural constituent of ribosome"/>
    <property type="evidence" value="ECO:0007669"/>
    <property type="project" value="InterPro"/>
</dbReference>
<dbReference type="GO" id="GO:0006412">
    <property type="term" value="P:translation"/>
    <property type="evidence" value="ECO:0007669"/>
    <property type="project" value="InterPro"/>
</dbReference>
<dbReference type="CDD" id="cd00403">
    <property type="entry name" value="Ribosomal_L1"/>
    <property type="match status" value="1"/>
</dbReference>
<dbReference type="FunFam" id="3.30.190.20:FF:000006">
    <property type="entry name" value="Ribosomal protein"/>
    <property type="match status" value="1"/>
</dbReference>
<dbReference type="FunFam" id="3.40.50.790:FF:000002">
    <property type="entry name" value="Ribosomal protein"/>
    <property type="match status" value="1"/>
</dbReference>
<dbReference type="FunFam" id="3.30.190.20:FF:000009">
    <property type="entry name" value="Ribosomal protein L10a"/>
    <property type="match status" value="1"/>
</dbReference>
<dbReference type="Gene3D" id="3.30.190.20">
    <property type="match status" value="1"/>
</dbReference>
<dbReference type="Gene3D" id="3.40.50.790">
    <property type="match status" value="1"/>
</dbReference>
<dbReference type="InterPro" id="IPR050257">
    <property type="entry name" value="eL8/uL1-like"/>
</dbReference>
<dbReference type="InterPro" id="IPR002143">
    <property type="entry name" value="Ribosomal_uL1"/>
</dbReference>
<dbReference type="InterPro" id="IPR023674">
    <property type="entry name" value="Ribosomal_uL1-like"/>
</dbReference>
<dbReference type="InterPro" id="IPR028364">
    <property type="entry name" value="Ribosomal_uL1/biogenesis"/>
</dbReference>
<dbReference type="InterPro" id="IPR016095">
    <property type="entry name" value="Ribosomal_uL1_3-a/b-sand"/>
</dbReference>
<dbReference type="PANTHER" id="PTHR23105">
    <property type="entry name" value="RIBOSOMAL PROTEIN L7AE FAMILY MEMBER"/>
    <property type="match status" value="1"/>
</dbReference>
<dbReference type="Pfam" id="PF00687">
    <property type="entry name" value="Ribosomal_L1"/>
    <property type="match status" value="1"/>
</dbReference>
<dbReference type="PIRSF" id="PIRSF002155">
    <property type="entry name" value="Ribosomal_L1"/>
    <property type="match status" value="1"/>
</dbReference>
<dbReference type="SUPFAM" id="SSF56808">
    <property type="entry name" value="Ribosomal protein L1"/>
    <property type="match status" value="1"/>
</dbReference>
<dbReference type="PROSITE" id="PS01199">
    <property type="entry name" value="RIBOSOMAL_L1"/>
    <property type="match status" value="1"/>
</dbReference>
<proteinExistence type="evidence at transcript level"/>
<evidence type="ECO:0000305" key="1"/>